<organism evidence="2">
    <name type="scientific">Cyprinus carpio</name>
    <name type="common">Common carp</name>
    <dbReference type="NCBI Taxonomy" id="7962"/>
    <lineage>
        <taxon>Eukaryota</taxon>
        <taxon>Metazoa</taxon>
        <taxon>Chordata</taxon>
        <taxon>Craniata</taxon>
        <taxon>Vertebrata</taxon>
        <taxon>Euteleostomi</taxon>
        <taxon>Actinopterygii</taxon>
        <taxon>Neopterygii</taxon>
        <taxon>Teleostei</taxon>
        <taxon>Ostariophysi</taxon>
        <taxon>Cypriniformes</taxon>
        <taxon>Cyprinidae</taxon>
        <taxon>Cyprininae</taxon>
        <taxon>Cyprinus</taxon>
    </lineage>
</organism>
<reference evidence="2" key="1">
    <citation type="journal article" date="1996" name="Eur. J. Biochem.">
        <title>Characterization and ion channel activities of novel antibacterial proteins from the skin mucosa of carp (Cyprinus carpio).</title>
        <authorList>
            <person name="Lemaitre C."/>
            <person name="Orange N."/>
            <person name="Saglio P."/>
            <person name="Saint N."/>
            <person name="Gagnon J."/>
            <person name="Molle G."/>
        </authorList>
    </citation>
    <scope>PROTEIN SEQUENCE</scope>
    <scope>FUNCTION</scope>
    <source>
        <tissue>Skin mucus</tissue>
    </source>
</reference>
<sequence>GIGGKPVQTAFVDNDGIYD</sequence>
<comment type="function">
    <text evidence="1 2">Has antibacterial activity. It inhibits fish bacterial pathogens, A.hydrophila and M.luteus, and also E.coli, P.fluorescens and S.aureus. Forms large ion channels responsible for disrupting the cellular envelope of bacteria leading to cell lysis.</text>
</comment>
<comment type="PTM">
    <text evidence="2">Glycosylated.</text>
</comment>
<dbReference type="PIR" id="S74087">
    <property type="entry name" value="S74087"/>
</dbReference>
<dbReference type="Proteomes" id="UP000694384">
    <property type="component" value="Unplaced"/>
</dbReference>
<dbReference type="Proteomes" id="UP000694427">
    <property type="component" value="Unplaced"/>
</dbReference>
<dbReference type="Proteomes" id="UP000694700">
    <property type="component" value="Unplaced"/>
</dbReference>
<dbReference type="Proteomes" id="UP000694701">
    <property type="component" value="Unplaced"/>
</dbReference>
<dbReference type="Proteomes" id="UP001155660">
    <property type="component" value="Unplaced"/>
</dbReference>
<dbReference type="GO" id="GO:0050829">
    <property type="term" value="P:defense response to Gram-negative bacterium"/>
    <property type="evidence" value="ECO:0000304"/>
    <property type="project" value="UniProtKB"/>
</dbReference>
<dbReference type="GO" id="GO:0031640">
    <property type="term" value="P:killing of cells of another organism"/>
    <property type="evidence" value="ECO:0007669"/>
    <property type="project" value="UniProtKB-KW"/>
</dbReference>
<dbReference type="GO" id="GO:0045161">
    <property type="term" value="P:neuronal ion channel clustering"/>
    <property type="evidence" value="ECO:0000304"/>
    <property type="project" value="UniProtKB"/>
</dbReference>
<keyword id="KW-0044">Antibiotic</keyword>
<keyword id="KW-0929">Antimicrobial</keyword>
<keyword id="KW-0204">Cytolysis</keyword>
<keyword id="KW-0903">Direct protein sequencing</keyword>
<keyword id="KW-0325">Glycoprotein</keyword>
<keyword id="KW-1185">Reference proteome</keyword>
<proteinExistence type="evidence at protein level"/>
<accession>P81925</accession>
<evidence type="ECO:0000269" key="1">
    <source>
    </source>
</evidence>
<evidence type="ECO:0000305" key="2"/>
<feature type="chain" id="PRO_0000064420" description="27 kDa antibacterial protein">
    <location>
        <begin position="1"/>
        <end position="19" status="greater than"/>
    </location>
</feature>
<feature type="non-terminal residue">
    <location>
        <position position="19"/>
    </location>
</feature>
<name>AB27_CYPCA</name>
<protein>
    <recommendedName>
        <fullName>27 kDa antibacterial protein</fullName>
    </recommendedName>
</protein>